<feature type="chain" id="PRO_1000114332" description="Protein RecA">
    <location>
        <begin position="1"/>
        <end position="353"/>
    </location>
</feature>
<feature type="region of interest" description="Disordered" evidence="2">
    <location>
        <begin position="330"/>
        <end position="353"/>
    </location>
</feature>
<feature type="compositionally biased region" description="Acidic residues" evidence="2">
    <location>
        <begin position="339"/>
        <end position="353"/>
    </location>
</feature>
<feature type="binding site" evidence="1">
    <location>
        <begin position="67"/>
        <end position="74"/>
    </location>
    <ligand>
        <name>ATP</name>
        <dbReference type="ChEBI" id="CHEBI:30616"/>
    </ligand>
</feature>
<proteinExistence type="inferred from homology"/>
<name>RECA_ECOSE</name>
<protein>
    <recommendedName>
        <fullName evidence="1">Protein RecA</fullName>
    </recommendedName>
    <alternativeName>
        <fullName evidence="1">Recombinase A</fullName>
    </alternativeName>
</protein>
<reference key="1">
    <citation type="journal article" date="2008" name="DNA Res.">
        <title>Complete genome sequence and comparative analysis of the wild-type commensal Escherichia coli strain SE11 isolated from a healthy adult.</title>
        <authorList>
            <person name="Oshima K."/>
            <person name="Toh H."/>
            <person name="Ogura Y."/>
            <person name="Sasamoto H."/>
            <person name="Morita H."/>
            <person name="Park S.-H."/>
            <person name="Ooka T."/>
            <person name="Iyoda S."/>
            <person name="Taylor T.D."/>
            <person name="Hayashi T."/>
            <person name="Itoh K."/>
            <person name="Hattori M."/>
        </authorList>
    </citation>
    <scope>NUCLEOTIDE SEQUENCE [LARGE SCALE GENOMIC DNA]</scope>
    <source>
        <strain>SE11</strain>
    </source>
</reference>
<dbReference type="EMBL" id="AP009240">
    <property type="protein sequence ID" value="BAG78471.1"/>
    <property type="molecule type" value="Genomic_DNA"/>
</dbReference>
<dbReference type="RefSeq" id="WP_000963143.1">
    <property type="nucleotide sequence ID" value="NC_011415.1"/>
</dbReference>
<dbReference type="SMR" id="B6I685"/>
<dbReference type="GeneID" id="93779312"/>
<dbReference type="KEGG" id="ecy:ECSE_2947"/>
<dbReference type="HOGENOM" id="CLU_040469_3_2_6"/>
<dbReference type="Proteomes" id="UP000008199">
    <property type="component" value="Chromosome"/>
</dbReference>
<dbReference type="GO" id="GO:0005829">
    <property type="term" value="C:cytosol"/>
    <property type="evidence" value="ECO:0007669"/>
    <property type="project" value="TreeGrafter"/>
</dbReference>
<dbReference type="GO" id="GO:0005524">
    <property type="term" value="F:ATP binding"/>
    <property type="evidence" value="ECO:0007669"/>
    <property type="project" value="UniProtKB-UniRule"/>
</dbReference>
<dbReference type="GO" id="GO:0016887">
    <property type="term" value="F:ATP hydrolysis activity"/>
    <property type="evidence" value="ECO:0007669"/>
    <property type="project" value="InterPro"/>
</dbReference>
<dbReference type="GO" id="GO:0140664">
    <property type="term" value="F:ATP-dependent DNA damage sensor activity"/>
    <property type="evidence" value="ECO:0007669"/>
    <property type="project" value="InterPro"/>
</dbReference>
<dbReference type="GO" id="GO:0003684">
    <property type="term" value="F:damaged DNA binding"/>
    <property type="evidence" value="ECO:0007669"/>
    <property type="project" value="UniProtKB-UniRule"/>
</dbReference>
<dbReference type="GO" id="GO:0003697">
    <property type="term" value="F:single-stranded DNA binding"/>
    <property type="evidence" value="ECO:0007669"/>
    <property type="project" value="UniProtKB-UniRule"/>
</dbReference>
<dbReference type="GO" id="GO:0006310">
    <property type="term" value="P:DNA recombination"/>
    <property type="evidence" value="ECO:0007669"/>
    <property type="project" value="UniProtKB-UniRule"/>
</dbReference>
<dbReference type="GO" id="GO:0006281">
    <property type="term" value="P:DNA repair"/>
    <property type="evidence" value="ECO:0007669"/>
    <property type="project" value="UniProtKB-UniRule"/>
</dbReference>
<dbReference type="GO" id="GO:0009432">
    <property type="term" value="P:SOS response"/>
    <property type="evidence" value="ECO:0007669"/>
    <property type="project" value="UniProtKB-UniRule"/>
</dbReference>
<dbReference type="CDD" id="cd00983">
    <property type="entry name" value="RecA"/>
    <property type="match status" value="1"/>
</dbReference>
<dbReference type="FunFam" id="3.40.50.300:FF:000087">
    <property type="entry name" value="Recombinase RecA"/>
    <property type="match status" value="1"/>
</dbReference>
<dbReference type="Gene3D" id="3.40.50.300">
    <property type="entry name" value="P-loop containing nucleotide triphosphate hydrolases"/>
    <property type="match status" value="1"/>
</dbReference>
<dbReference type="HAMAP" id="MF_00268">
    <property type="entry name" value="RecA"/>
    <property type="match status" value="1"/>
</dbReference>
<dbReference type="InterPro" id="IPR003593">
    <property type="entry name" value="AAA+_ATPase"/>
</dbReference>
<dbReference type="InterPro" id="IPR013765">
    <property type="entry name" value="DNA_recomb/repair_RecA"/>
</dbReference>
<dbReference type="InterPro" id="IPR020584">
    <property type="entry name" value="DNA_recomb/repair_RecA_CS"/>
</dbReference>
<dbReference type="InterPro" id="IPR027417">
    <property type="entry name" value="P-loop_NTPase"/>
</dbReference>
<dbReference type="InterPro" id="IPR049261">
    <property type="entry name" value="RecA-like_C"/>
</dbReference>
<dbReference type="InterPro" id="IPR049428">
    <property type="entry name" value="RecA-like_N"/>
</dbReference>
<dbReference type="InterPro" id="IPR020588">
    <property type="entry name" value="RecA_ATP-bd"/>
</dbReference>
<dbReference type="InterPro" id="IPR023400">
    <property type="entry name" value="RecA_C_sf"/>
</dbReference>
<dbReference type="InterPro" id="IPR020587">
    <property type="entry name" value="RecA_monomer-monomer_interface"/>
</dbReference>
<dbReference type="NCBIfam" id="TIGR02012">
    <property type="entry name" value="tigrfam_recA"/>
    <property type="match status" value="1"/>
</dbReference>
<dbReference type="PANTHER" id="PTHR45900:SF1">
    <property type="entry name" value="MITOCHONDRIAL DNA REPAIR PROTEIN RECA HOMOLOG-RELATED"/>
    <property type="match status" value="1"/>
</dbReference>
<dbReference type="PANTHER" id="PTHR45900">
    <property type="entry name" value="RECA"/>
    <property type="match status" value="1"/>
</dbReference>
<dbReference type="Pfam" id="PF00154">
    <property type="entry name" value="RecA"/>
    <property type="match status" value="1"/>
</dbReference>
<dbReference type="Pfam" id="PF21096">
    <property type="entry name" value="RecA_C"/>
    <property type="match status" value="1"/>
</dbReference>
<dbReference type="PRINTS" id="PR00142">
    <property type="entry name" value="RECA"/>
</dbReference>
<dbReference type="SMART" id="SM00382">
    <property type="entry name" value="AAA"/>
    <property type="match status" value="1"/>
</dbReference>
<dbReference type="SUPFAM" id="SSF52540">
    <property type="entry name" value="P-loop containing nucleoside triphosphate hydrolases"/>
    <property type="match status" value="1"/>
</dbReference>
<dbReference type="SUPFAM" id="SSF54752">
    <property type="entry name" value="RecA protein, C-terminal domain"/>
    <property type="match status" value="1"/>
</dbReference>
<dbReference type="PROSITE" id="PS00321">
    <property type="entry name" value="RECA_1"/>
    <property type="match status" value="1"/>
</dbReference>
<dbReference type="PROSITE" id="PS50162">
    <property type="entry name" value="RECA_2"/>
    <property type="match status" value="1"/>
</dbReference>
<dbReference type="PROSITE" id="PS50163">
    <property type="entry name" value="RECA_3"/>
    <property type="match status" value="1"/>
</dbReference>
<sequence length="353" mass="37973">MAIDENKQKALAAALGQIEKQFGKGSIMRLGEDRSMDVETISTGSLSLDIALGAGGLPMGRIVEIYGPESSGKTTLTLQVIAAAQREGKTCAFIDAEHALDPIYARKLGVDIDNLLCSQPDTGEQALEICDALARSGAVDVIVVDSVAALTPKAEIEGEIGDSHMGLAARMMSQAMRKLAGNLKQSNTLLIFINQIRMKIGVMFGNPETTTGGNALKFYASVRLDIRRIGAVKEGENVVGSETRVKVVKNKIAAPFKQAEFQILYGEGINFYGELVDLGVKEKLIEKAGAWYSYKGEKIGQGKANATAWLKDNPETAKEIEKKVRELLLSNPNSTPDFSVDDSEGVAETNEDF</sequence>
<evidence type="ECO:0000255" key="1">
    <source>
        <dbReference type="HAMAP-Rule" id="MF_00268"/>
    </source>
</evidence>
<evidence type="ECO:0000256" key="2">
    <source>
        <dbReference type="SAM" id="MobiDB-lite"/>
    </source>
</evidence>
<keyword id="KW-0067">ATP-binding</keyword>
<keyword id="KW-0963">Cytoplasm</keyword>
<keyword id="KW-0227">DNA damage</keyword>
<keyword id="KW-0233">DNA recombination</keyword>
<keyword id="KW-0234">DNA repair</keyword>
<keyword id="KW-0238">DNA-binding</keyword>
<keyword id="KW-0547">Nucleotide-binding</keyword>
<keyword id="KW-0742">SOS response</keyword>
<comment type="function">
    <text evidence="1">Can catalyze the hydrolysis of ATP in the presence of single-stranded DNA, the ATP-dependent uptake of single-stranded DNA by duplex DNA, and the ATP-dependent hybridization of homologous single-stranded DNAs. It interacts with LexA causing its activation and leading to its autocatalytic cleavage.</text>
</comment>
<comment type="subcellular location">
    <subcellularLocation>
        <location evidence="1">Cytoplasm</location>
    </subcellularLocation>
</comment>
<comment type="similarity">
    <text evidence="1">Belongs to the RecA family.</text>
</comment>
<organism>
    <name type="scientific">Escherichia coli (strain SE11)</name>
    <dbReference type="NCBI Taxonomy" id="409438"/>
    <lineage>
        <taxon>Bacteria</taxon>
        <taxon>Pseudomonadati</taxon>
        <taxon>Pseudomonadota</taxon>
        <taxon>Gammaproteobacteria</taxon>
        <taxon>Enterobacterales</taxon>
        <taxon>Enterobacteriaceae</taxon>
        <taxon>Escherichia</taxon>
    </lineage>
</organism>
<gene>
    <name evidence="1" type="primary">recA</name>
    <name type="ordered locus">ECSE_2947</name>
</gene>
<accession>B6I685</accession>